<reference key="1">
    <citation type="journal article" date="2006" name="BMC Genomics">
        <title>The genome of the square archaeon Haloquadratum walsbyi: life at the limits of water activity.</title>
        <authorList>
            <person name="Bolhuis H."/>
            <person name="Palm P."/>
            <person name="Wende A."/>
            <person name="Falb M."/>
            <person name="Rampp M."/>
            <person name="Rodriguez-Valera F."/>
            <person name="Pfeiffer F."/>
            <person name="Oesterhelt D."/>
        </authorList>
    </citation>
    <scope>NUCLEOTIDE SEQUENCE [LARGE SCALE GENOMIC DNA]</scope>
    <source>
        <strain>DSM 16790 / HBSQ001</strain>
    </source>
</reference>
<organism>
    <name type="scientific">Haloquadratum walsbyi (strain DSM 16790 / HBSQ001)</name>
    <dbReference type="NCBI Taxonomy" id="362976"/>
    <lineage>
        <taxon>Archaea</taxon>
        <taxon>Methanobacteriati</taxon>
        <taxon>Methanobacteriota</taxon>
        <taxon>Stenosarchaea group</taxon>
        <taxon>Halobacteria</taxon>
        <taxon>Halobacteriales</taxon>
        <taxon>Haloferacaceae</taxon>
        <taxon>Haloquadratum</taxon>
    </lineage>
</organism>
<gene>
    <name type="ordered locus">HQ_2050A</name>
</gene>
<evidence type="ECO:0000255" key="1">
    <source>
        <dbReference type="HAMAP-Rule" id="MF_01467"/>
    </source>
</evidence>
<keyword id="KW-0660">Purine salvage</keyword>
<keyword id="KW-1185">Reference proteome</keyword>
<keyword id="KW-0808">Transferase</keyword>
<proteinExistence type="inferred from homology"/>
<sequence>MERLHESLHEAPIIDKDGYEYLVHPISNGVPVLEPGLLREVVIDIMQQSDFNVDKIVAPEAMGIHLATALSLQTDVPLVVIRKRSYGLPGEVALHKSTGYSESEMYINDIEAGDRILIIDDLLSTGGTLAAICGALDDIGTEIIDIVVVIRKIGQSAMDELEHDVTSLVDITVEDGEVTIQ</sequence>
<name>HPRL2_HALWD</name>
<protein>
    <recommendedName>
        <fullName evidence="1">HGPRTase-like protein 2</fullName>
        <ecNumber evidence="1">2.4.2.-</ecNumber>
    </recommendedName>
</protein>
<comment type="function">
    <text evidence="1">May catalyze a purine salvage reaction, the substrate is unknown.</text>
</comment>
<comment type="similarity">
    <text evidence="1">Belongs to the purine/pyrimidine phosphoribosyltransferase family. Archaeal HPRT subfamily.</text>
</comment>
<feature type="chain" id="PRO_0000415455" description="HGPRTase-like protein 2">
    <location>
        <begin position="1"/>
        <end position="181"/>
    </location>
</feature>
<dbReference type="EC" id="2.4.2.-" evidence="1"/>
<dbReference type="EMBL" id="AM180088">
    <property type="protein sequence ID" value="CAJ52177.1"/>
    <property type="molecule type" value="Genomic_DNA"/>
</dbReference>
<dbReference type="SMR" id="Q18IJ5"/>
<dbReference type="STRING" id="362976.HQ_2050A"/>
<dbReference type="GeneID" id="4193705"/>
<dbReference type="KEGG" id="hwa:HQ_2050A"/>
<dbReference type="eggNOG" id="arCOG00030">
    <property type="taxonomic scope" value="Archaea"/>
</dbReference>
<dbReference type="HOGENOM" id="CLU_126376_0_0_2"/>
<dbReference type="Proteomes" id="UP000001975">
    <property type="component" value="Chromosome"/>
</dbReference>
<dbReference type="GO" id="GO:0016740">
    <property type="term" value="F:transferase activity"/>
    <property type="evidence" value="ECO:0007669"/>
    <property type="project" value="UniProtKB-KW"/>
</dbReference>
<dbReference type="GO" id="GO:0006166">
    <property type="term" value="P:purine ribonucleoside salvage"/>
    <property type="evidence" value="ECO:0007669"/>
    <property type="project" value="UniProtKB-KW"/>
</dbReference>
<dbReference type="CDD" id="cd06223">
    <property type="entry name" value="PRTases_typeI"/>
    <property type="match status" value="1"/>
</dbReference>
<dbReference type="Gene3D" id="3.40.50.2020">
    <property type="match status" value="1"/>
</dbReference>
<dbReference type="HAMAP" id="MF_01467">
    <property type="entry name" value="Hypx_phosphoribosyltr"/>
    <property type="match status" value="1"/>
</dbReference>
<dbReference type="InterPro" id="IPR026597">
    <property type="entry name" value="HGPRTase-like"/>
</dbReference>
<dbReference type="InterPro" id="IPR000836">
    <property type="entry name" value="PRibTrfase_dom"/>
</dbReference>
<dbReference type="InterPro" id="IPR029057">
    <property type="entry name" value="PRTase-like"/>
</dbReference>
<dbReference type="InterPro" id="IPR050118">
    <property type="entry name" value="Pur/Pyrimidine_PRTase"/>
</dbReference>
<dbReference type="NCBIfam" id="NF040646">
    <property type="entry name" value="HPT_Archaea"/>
    <property type="match status" value="1"/>
</dbReference>
<dbReference type="NCBIfam" id="NF002635">
    <property type="entry name" value="PRK02304.1-4"/>
    <property type="match status" value="1"/>
</dbReference>
<dbReference type="PANTHER" id="PTHR43864">
    <property type="entry name" value="HYPOXANTHINE/GUANINE PHOSPHORIBOSYLTRANSFERASE"/>
    <property type="match status" value="1"/>
</dbReference>
<dbReference type="PANTHER" id="PTHR43864:SF1">
    <property type="entry name" value="XANTHINE PHOSPHORIBOSYLTRANSFERASE"/>
    <property type="match status" value="1"/>
</dbReference>
<dbReference type="Pfam" id="PF00156">
    <property type="entry name" value="Pribosyltran"/>
    <property type="match status" value="1"/>
</dbReference>
<dbReference type="SUPFAM" id="SSF53271">
    <property type="entry name" value="PRTase-like"/>
    <property type="match status" value="1"/>
</dbReference>
<dbReference type="PROSITE" id="PS00103">
    <property type="entry name" value="PUR_PYR_PR_TRANSFER"/>
    <property type="match status" value="1"/>
</dbReference>
<accession>Q18IJ5</accession>